<feature type="chain" id="PRO_0000180750" description="Glucose-6-phosphate isomerase 2">
    <location>
        <begin position="1"/>
        <end position="551"/>
    </location>
</feature>
<feature type="active site" description="Proton donor" evidence="1">
    <location>
        <position position="359"/>
    </location>
</feature>
<feature type="active site" evidence="1">
    <location>
        <position position="390"/>
    </location>
</feature>
<feature type="active site" evidence="1">
    <location>
        <position position="514"/>
    </location>
</feature>
<keyword id="KW-0963">Cytoplasm</keyword>
<keyword id="KW-0312">Gluconeogenesis</keyword>
<keyword id="KW-0324">Glycolysis</keyword>
<keyword id="KW-0413">Isomerase</keyword>
<keyword id="KW-1185">Reference proteome</keyword>
<proteinExistence type="inferred from homology"/>
<sequence length="551" mass="60570">MNADGRTRLHQTPEWAALVKHREQLGEVRLREMFAADPGRGTGWTLRVGDLHVDYSKHLVTDETLALLQELAAATGVSGLRDAMFRGERINITEDRAVLHTALRAPRDAVIEVDGENVVPQVHAVLDKMAGFADRVRTGEWTGHTGRRIRNVVNIGIGGSDLGPAMAYEALRAFTDRSLTLRFVSNVDGADLHEAVRDLDPAETLFIIASKTFTTIETITNATSARSWLLAGLGGDEKAVAKHFVALSTNAEKVADFGIDTANMFEFWDWVGGRYSFDSAIGLSLMIAIGPDRFREMLDGFHLVDEHFRTAPAESNVPLLMGLLGVWYGSFLGAQSHAVLPYSHYLSKFTAYLQQLDMESNGKSVDREGKPVQWQTGPVVWGTPGTNGQHAYYQLIHQGTKLIPADFIGFARPVDELSEELKSQHDLLMANFFAQTQALAFGKTPDEVRAEGVPEELVPHKTFPGDHPTTTILARELTPSVLGQLVALYEHKVFVQGAIWNIDSFDQWGVELGKVLAKRVEPALTEGADVPGLDPSTGALVAAYRELRGRR</sequence>
<organism>
    <name type="scientific">Streptomyces coelicolor (strain ATCC BAA-471 / A3(2) / M145)</name>
    <dbReference type="NCBI Taxonomy" id="100226"/>
    <lineage>
        <taxon>Bacteria</taxon>
        <taxon>Bacillati</taxon>
        <taxon>Actinomycetota</taxon>
        <taxon>Actinomycetes</taxon>
        <taxon>Kitasatosporales</taxon>
        <taxon>Streptomycetaceae</taxon>
        <taxon>Streptomyces</taxon>
        <taxon>Streptomyces albidoflavus group</taxon>
    </lineage>
</organism>
<dbReference type="EC" id="5.3.1.9" evidence="1"/>
<dbReference type="EMBL" id="AL939110">
    <property type="protein sequence ID" value="CAB38132.1"/>
    <property type="molecule type" value="Genomic_DNA"/>
</dbReference>
<dbReference type="PIR" id="T36015">
    <property type="entry name" value="T36015"/>
</dbReference>
<dbReference type="RefSeq" id="NP_626206.1">
    <property type="nucleotide sequence ID" value="NC_003888.3"/>
</dbReference>
<dbReference type="SMR" id="Q9Z523"/>
<dbReference type="FunCoup" id="Q9Z523">
    <property type="interactions" value="441"/>
</dbReference>
<dbReference type="STRING" id="100226.gene:17759539"/>
<dbReference type="PaxDb" id="100226-SCO1942"/>
<dbReference type="KEGG" id="sco:SCO1942"/>
<dbReference type="PATRIC" id="fig|100226.15.peg.1969"/>
<dbReference type="eggNOG" id="COG0166">
    <property type="taxonomic scope" value="Bacteria"/>
</dbReference>
<dbReference type="HOGENOM" id="CLU_017947_3_1_11"/>
<dbReference type="InParanoid" id="Q9Z523"/>
<dbReference type="OrthoDB" id="140919at2"/>
<dbReference type="PhylomeDB" id="Q9Z523"/>
<dbReference type="UniPathway" id="UPA00109">
    <property type="reaction ID" value="UER00181"/>
</dbReference>
<dbReference type="UniPathway" id="UPA00138"/>
<dbReference type="Proteomes" id="UP000001973">
    <property type="component" value="Chromosome"/>
</dbReference>
<dbReference type="GO" id="GO:0005829">
    <property type="term" value="C:cytosol"/>
    <property type="evidence" value="ECO:0000318"/>
    <property type="project" value="GO_Central"/>
</dbReference>
<dbReference type="GO" id="GO:0097367">
    <property type="term" value="F:carbohydrate derivative binding"/>
    <property type="evidence" value="ECO:0007669"/>
    <property type="project" value="InterPro"/>
</dbReference>
<dbReference type="GO" id="GO:0004347">
    <property type="term" value="F:glucose-6-phosphate isomerase activity"/>
    <property type="evidence" value="ECO:0000318"/>
    <property type="project" value="GO_Central"/>
</dbReference>
<dbReference type="GO" id="GO:0048029">
    <property type="term" value="F:monosaccharide binding"/>
    <property type="evidence" value="ECO:0000318"/>
    <property type="project" value="GO_Central"/>
</dbReference>
<dbReference type="GO" id="GO:0006094">
    <property type="term" value="P:gluconeogenesis"/>
    <property type="evidence" value="ECO:0000318"/>
    <property type="project" value="GO_Central"/>
</dbReference>
<dbReference type="GO" id="GO:0051156">
    <property type="term" value="P:glucose 6-phosphate metabolic process"/>
    <property type="evidence" value="ECO:0000318"/>
    <property type="project" value="GO_Central"/>
</dbReference>
<dbReference type="GO" id="GO:0006096">
    <property type="term" value="P:glycolytic process"/>
    <property type="evidence" value="ECO:0000318"/>
    <property type="project" value="GO_Central"/>
</dbReference>
<dbReference type="CDD" id="cd05015">
    <property type="entry name" value="SIS_PGI_1"/>
    <property type="match status" value="1"/>
</dbReference>
<dbReference type="CDD" id="cd05016">
    <property type="entry name" value="SIS_PGI_2"/>
    <property type="match status" value="1"/>
</dbReference>
<dbReference type="FunFam" id="1.10.1390.10:FF:000001">
    <property type="entry name" value="Glucose-6-phosphate isomerase"/>
    <property type="match status" value="1"/>
</dbReference>
<dbReference type="FunFam" id="3.40.50.10490:FF:000018">
    <property type="entry name" value="Glucose-6-phosphate isomerase"/>
    <property type="match status" value="1"/>
</dbReference>
<dbReference type="Gene3D" id="1.10.1390.10">
    <property type="match status" value="1"/>
</dbReference>
<dbReference type="Gene3D" id="3.40.50.10490">
    <property type="entry name" value="Glucose-6-phosphate isomerase like protein, domain 1"/>
    <property type="match status" value="2"/>
</dbReference>
<dbReference type="HAMAP" id="MF_00473">
    <property type="entry name" value="G6P_isomerase"/>
    <property type="match status" value="1"/>
</dbReference>
<dbReference type="InterPro" id="IPR001672">
    <property type="entry name" value="G6P_Isomerase"/>
</dbReference>
<dbReference type="InterPro" id="IPR023096">
    <property type="entry name" value="G6P_Isomerase_C"/>
</dbReference>
<dbReference type="InterPro" id="IPR018189">
    <property type="entry name" value="Phosphoglucose_isomerase_CS"/>
</dbReference>
<dbReference type="InterPro" id="IPR046348">
    <property type="entry name" value="SIS_dom_sf"/>
</dbReference>
<dbReference type="InterPro" id="IPR035476">
    <property type="entry name" value="SIS_PGI_1"/>
</dbReference>
<dbReference type="InterPro" id="IPR035482">
    <property type="entry name" value="SIS_PGI_2"/>
</dbReference>
<dbReference type="NCBIfam" id="NF001211">
    <property type="entry name" value="PRK00179.1"/>
    <property type="match status" value="1"/>
</dbReference>
<dbReference type="PANTHER" id="PTHR11469">
    <property type="entry name" value="GLUCOSE-6-PHOSPHATE ISOMERASE"/>
    <property type="match status" value="1"/>
</dbReference>
<dbReference type="PANTHER" id="PTHR11469:SF1">
    <property type="entry name" value="GLUCOSE-6-PHOSPHATE ISOMERASE"/>
    <property type="match status" value="1"/>
</dbReference>
<dbReference type="Pfam" id="PF00342">
    <property type="entry name" value="PGI"/>
    <property type="match status" value="1"/>
</dbReference>
<dbReference type="PRINTS" id="PR00662">
    <property type="entry name" value="G6PISOMERASE"/>
</dbReference>
<dbReference type="SUPFAM" id="SSF53697">
    <property type="entry name" value="SIS domain"/>
    <property type="match status" value="1"/>
</dbReference>
<dbReference type="PROSITE" id="PS00765">
    <property type="entry name" value="P_GLUCOSE_ISOMERASE_1"/>
    <property type="match status" value="1"/>
</dbReference>
<dbReference type="PROSITE" id="PS00174">
    <property type="entry name" value="P_GLUCOSE_ISOMERASE_2"/>
    <property type="match status" value="1"/>
</dbReference>
<dbReference type="PROSITE" id="PS51463">
    <property type="entry name" value="P_GLUCOSE_ISOMERASE_3"/>
    <property type="match status" value="1"/>
</dbReference>
<accession>Q9Z523</accession>
<protein>
    <recommendedName>
        <fullName evidence="1">Glucose-6-phosphate isomerase 2</fullName>
        <shortName evidence="1">GPI 2</shortName>
        <ecNumber evidence="1">5.3.1.9</ecNumber>
    </recommendedName>
    <alternativeName>
        <fullName evidence="1">Phosphoglucose isomerase 2</fullName>
        <shortName evidence="1">PGI 2</shortName>
    </alternativeName>
    <alternativeName>
        <fullName evidence="1">Phosphohexose isomerase 2</fullName>
        <shortName evidence="1">PHI 2</shortName>
    </alternativeName>
</protein>
<name>G6PI2_STRCO</name>
<gene>
    <name evidence="1" type="primary">pgi2</name>
    <name type="ordered locus">SCO1942</name>
    <name type="ORF">SCC54.02c</name>
</gene>
<evidence type="ECO:0000255" key="1">
    <source>
        <dbReference type="HAMAP-Rule" id="MF_00473"/>
    </source>
</evidence>
<evidence type="ECO:0000305" key="2"/>
<comment type="function">
    <text evidence="1">Catalyzes the reversible isomerization of glucose-6-phosphate to fructose-6-phosphate.</text>
</comment>
<comment type="catalytic activity">
    <reaction evidence="1">
        <text>alpha-D-glucose 6-phosphate = beta-D-fructose 6-phosphate</text>
        <dbReference type="Rhea" id="RHEA:11816"/>
        <dbReference type="ChEBI" id="CHEBI:57634"/>
        <dbReference type="ChEBI" id="CHEBI:58225"/>
        <dbReference type="EC" id="5.3.1.9"/>
    </reaction>
</comment>
<comment type="pathway">
    <text evidence="1">Carbohydrate biosynthesis; gluconeogenesis.</text>
</comment>
<comment type="pathway">
    <text evidence="1">Carbohydrate degradation; glycolysis; D-glyceraldehyde 3-phosphate and glycerone phosphate from D-glucose: step 2/4.</text>
</comment>
<comment type="subcellular location">
    <subcellularLocation>
        <location evidence="1">Cytoplasm</location>
    </subcellularLocation>
</comment>
<comment type="similarity">
    <text evidence="1 2">Belongs to the GPI family.</text>
</comment>
<reference key="1">
    <citation type="journal article" date="2002" name="Nature">
        <title>Complete genome sequence of the model actinomycete Streptomyces coelicolor A3(2).</title>
        <authorList>
            <person name="Bentley S.D."/>
            <person name="Chater K.F."/>
            <person name="Cerdeno-Tarraga A.-M."/>
            <person name="Challis G.L."/>
            <person name="Thomson N.R."/>
            <person name="James K.D."/>
            <person name="Harris D.E."/>
            <person name="Quail M.A."/>
            <person name="Kieser H."/>
            <person name="Harper D."/>
            <person name="Bateman A."/>
            <person name="Brown S."/>
            <person name="Chandra G."/>
            <person name="Chen C.W."/>
            <person name="Collins M."/>
            <person name="Cronin A."/>
            <person name="Fraser A."/>
            <person name="Goble A."/>
            <person name="Hidalgo J."/>
            <person name="Hornsby T."/>
            <person name="Howarth S."/>
            <person name="Huang C.-H."/>
            <person name="Kieser T."/>
            <person name="Larke L."/>
            <person name="Murphy L.D."/>
            <person name="Oliver K."/>
            <person name="O'Neil S."/>
            <person name="Rabbinowitsch E."/>
            <person name="Rajandream M.A."/>
            <person name="Rutherford K.M."/>
            <person name="Rutter S."/>
            <person name="Seeger K."/>
            <person name="Saunders D."/>
            <person name="Sharp S."/>
            <person name="Squares R."/>
            <person name="Squares S."/>
            <person name="Taylor K."/>
            <person name="Warren T."/>
            <person name="Wietzorrek A."/>
            <person name="Woodward J.R."/>
            <person name="Barrell B.G."/>
            <person name="Parkhill J."/>
            <person name="Hopwood D.A."/>
        </authorList>
    </citation>
    <scope>NUCLEOTIDE SEQUENCE [LARGE SCALE GENOMIC DNA]</scope>
    <source>
        <strain>ATCC BAA-471 / A3(2) / M145</strain>
    </source>
</reference>